<proteinExistence type="inferred from homology"/>
<reference key="1">
    <citation type="submission" date="2006-06" db="EMBL/GenBank/DDBJ databases">
        <title>Complete sequence of chromosome of Mycobacterium sp. MCS.</title>
        <authorList>
            <consortium name="US DOE Joint Genome Institute"/>
            <person name="Copeland A."/>
            <person name="Lucas S."/>
            <person name="Lapidus A."/>
            <person name="Barry K."/>
            <person name="Detter J.C."/>
            <person name="Glavina del Rio T."/>
            <person name="Hammon N."/>
            <person name="Israni S."/>
            <person name="Dalin E."/>
            <person name="Tice H."/>
            <person name="Pitluck S."/>
            <person name="Martinez M."/>
            <person name="Schmutz J."/>
            <person name="Larimer F."/>
            <person name="Land M."/>
            <person name="Hauser L."/>
            <person name="Kyrpides N."/>
            <person name="Kim E."/>
            <person name="Miller C.D."/>
            <person name="Hughes J.E."/>
            <person name="Anderson A.J."/>
            <person name="Sims R.C."/>
            <person name="Richardson P."/>
        </authorList>
    </citation>
    <scope>NUCLEOTIDE SEQUENCE [LARGE SCALE GENOMIC DNA]</scope>
    <source>
        <strain>MCS</strain>
    </source>
</reference>
<organism>
    <name type="scientific">Mycobacterium sp. (strain MCS)</name>
    <dbReference type="NCBI Taxonomy" id="164756"/>
    <lineage>
        <taxon>Bacteria</taxon>
        <taxon>Bacillati</taxon>
        <taxon>Actinomycetota</taxon>
        <taxon>Actinomycetes</taxon>
        <taxon>Mycobacteriales</taxon>
        <taxon>Mycobacteriaceae</taxon>
        <taxon>Mycobacterium</taxon>
    </lineage>
</organism>
<comment type="function">
    <text evidence="1">Exhibits S-adenosyl-L-methionine-dependent methyltransferase activity.</text>
</comment>
<comment type="similarity">
    <text evidence="2">Belongs to the UPF0677 family.</text>
</comment>
<accession>Q1BD75</accession>
<gene>
    <name type="ordered locus">Mmcs_1045</name>
</gene>
<evidence type="ECO:0000250" key="1"/>
<evidence type="ECO:0000305" key="2"/>
<dbReference type="EC" id="2.1.1.-"/>
<dbReference type="EMBL" id="CP000384">
    <property type="protein sequence ID" value="ABG07159.1"/>
    <property type="molecule type" value="Genomic_DNA"/>
</dbReference>
<dbReference type="SMR" id="Q1BD75"/>
<dbReference type="KEGG" id="mmc:Mmcs_1045"/>
<dbReference type="HOGENOM" id="CLU_056160_2_1_11"/>
<dbReference type="BioCyc" id="MSP164756:G1G6O-1070-MONOMER"/>
<dbReference type="GO" id="GO:0008168">
    <property type="term" value="F:methyltransferase activity"/>
    <property type="evidence" value="ECO:0007669"/>
    <property type="project" value="UniProtKB-KW"/>
</dbReference>
<dbReference type="GO" id="GO:0032259">
    <property type="term" value="P:methylation"/>
    <property type="evidence" value="ECO:0007669"/>
    <property type="project" value="UniProtKB-KW"/>
</dbReference>
<dbReference type="FunFam" id="3.40.50.150:FF:000152">
    <property type="entry name" value="S-adenosyl-L-methionine-dependent methyltransferase"/>
    <property type="match status" value="1"/>
</dbReference>
<dbReference type="Gene3D" id="3.40.50.150">
    <property type="entry name" value="Vaccinia Virus protein VP39"/>
    <property type="match status" value="1"/>
</dbReference>
<dbReference type="InterPro" id="IPR007213">
    <property type="entry name" value="Ppm1/Ppm2/Tcmp"/>
</dbReference>
<dbReference type="InterPro" id="IPR029063">
    <property type="entry name" value="SAM-dependent_MTases_sf"/>
</dbReference>
<dbReference type="InterPro" id="IPR011610">
    <property type="entry name" value="SAM_mthyl_Trfase_ML2640-like"/>
</dbReference>
<dbReference type="NCBIfam" id="TIGR00027">
    <property type="entry name" value="mthyl_TIGR00027"/>
    <property type="match status" value="1"/>
</dbReference>
<dbReference type="PANTHER" id="PTHR43619">
    <property type="entry name" value="S-ADENOSYL-L-METHIONINE-DEPENDENT METHYLTRANSFERASE YKTD-RELATED"/>
    <property type="match status" value="1"/>
</dbReference>
<dbReference type="PANTHER" id="PTHR43619:SF2">
    <property type="entry name" value="S-ADENOSYL-L-METHIONINE-DEPENDENT METHYLTRANSFERASES SUPERFAMILY PROTEIN"/>
    <property type="match status" value="1"/>
</dbReference>
<dbReference type="Pfam" id="PF04072">
    <property type="entry name" value="LCM"/>
    <property type="match status" value="1"/>
</dbReference>
<dbReference type="SUPFAM" id="SSF53335">
    <property type="entry name" value="S-adenosyl-L-methionine-dependent methyltransferases"/>
    <property type="match status" value="1"/>
</dbReference>
<keyword id="KW-0489">Methyltransferase</keyword>
<keyword id="KW-0949">S-adenosyl-L-methionine</keyword>
<keyword id="KW-0808">Transferase</keyword>
<sequence>MARTDNDTWDLASSVGATATMVAAARAVATRAPDAVIDDPFAEPLVRAVGVDFFTRLATGDLTPTDLDPDATGGAGNMDRFADGMAARTRFFDDFFSDAADAGVRQAVILASGLDSRAYRLPWPAGTVVFEIDQPGVITFKSDTLARLGAKPTAVHRTVPVDLRDDWIGALEAAGFDRTEPSAWIAEGLFGYLPPEAQDRLLDQITELSPPGSRLAVEGVVSSPDADDEQIRERMQAVRDQWRQFGFDLDFSELVYTGERAEVAAYLGDRGWRTDSITATALLEKCGLQSAEDSSANFADVRYVTAVK</sequence>
<feature type="chain" id="PRO_0000361219" description="Putative S-adenosyl-L-methionine-dependent methyltransferase Mmcs_1045">
    <location>
        <begin position="1"/>
        <end position="308"/>
    </location>
</feature>
<feature type="binding site" evidence="1">
    <location>
        <position position="133"/>
    </location>
    <ligand>
        <name>S-adenosyl-L-methionine</name>
        <dbReference type="ChEBI" id="CHEBI:59789"/>
    </ligand>
</feature>
<feature type="binding site" evidence="1">
    <location>
        <begin position="162"/>
        <end position="163"/>
    </location>
    <ligand>
        <name>S-adenosyl-L-methionine</name>
        <dbReference type="ChEBI" id="CHEBI:59789"/>
    </ligand>
</feature>
<name>Y1045_MYCSS</name>
<protein>
    <recommendedName>
        <fullName>Putative S-adenosyl-L-methionine-dependent methyltransferase Mmcs_1045</fullName>
        <ecNumber>2.1.1.-</ecNumber>
    </recommendedName>
</protein>